<name>3SO8_NAJKA</name>
<organism>
    <name type="scientific">Naja kaouthia</name>
    <name type="common">Monocled cobra</name>
    <name type="synonym">Naja siamensis</name>
    <dbReference type="NCBI Taxonomy" id="8649"/>
    <lineage>
        <taxon>Eukaryota</taxon>
        <taxon>Metazoa</taxon>
        <taxon>Chordata</taxon>
        <taxon>Craniata</taxon>
        <taxon>Vertebrata</taxon>
        <taxon>Euteleostomi</taxon>
        <taxon>Lepidosauria</taxon>
        <taxon>Squamata</taxon>
        <taxon>Bifurcata</taxon>
        <taxon>Unidentata</taxon>
        <taxon>Episquamata</taxon>
        <taxon>Toxicofera</taxon>
        <taxon>Serpentes</taxon>
        <taxon>Colubroidea</taxon>
        <taxon>Elapidae</taxon>
        <taxon>Elapinae</taxon>
        <taxon>Naja</taxon>
    </lineage>
</organism>
<protein>
    <recommendedName>
        <fullName>Muscarinic toxin-like protein 3</fullName>
        <shortName>MTLP-3</shortName>
    </recommendedName>
</protein>
<reference key="1">
    <citation type="journal article" date="2000" name="Eur. J. Biochem.">
        <title>Muscarinic toxin-like proteins from cobra venom.</title>
        <authorList>
            <person name="Kukhtina V.V."/>
            <person name="Weise C."/>
            <person name="Muranova T.A."/>
            <person name="Starkov V.G."/>
            <person name="Franke P."/>
            <person name="Hucho F."/>
            <person name="Wnendt S."/>
            <person name="Gillen C."/>
            <person name="Tsetlin V.I."/>
            <person name="Utkin Y.N."/>
        </authorList>
    </citation>
    <scope>PROTEIN SEQUENCE</scope>
    <scope>SUBCELLULAR LOCATION</scope>
    <scope>MASS SPECTROMETRY</scope>
    <source>
        <tissue>Venom</tissue>
    </source>
</reference>
<accession>P82464</accession>
<keyword id="KW-0903">Direct protein sequencing</keyword>
<keyword id="KW-1015">Disulfide bond</keyword>
<keyword id="KW-1214">G-protein coupled acetylcholine receptor impairing toxin</keyword>
<keyword id="KW-1213">G-protein coupled receptor impairing toxin</keyword>
<keyword id="KW-0528">Neurotoxin</keyword>
<keyword id="KW-0629">Postsynaptic neurotoxin</keyword>
<keyword id="KW-0964">Secreted</keyword>
<keyword id="KW-0800">Toxin</keyword>
<sequence>TICYNHLTRTSETTEICPDSWYFCYKISLADGNDVRIKRGCTFTCPELRPTGIYVYCCRRDKCNQ</sequence>
<comment type="function">
    <text evidence="1">Antagonist of muscle and neuronal nicotinic acetylcholine receptors (nAChR) with highest affinity for neuronal alpha-7/CHRNA7 nAChRs.</text>
</comment>
<comment type="subunit">
    <text evidence="1">Homodimer; non-covalently linked.</text>
</comment>
<comment type="subcellular location">
    <subcellularLocation>
        <location evidence="3">Secreted</location>
    </subcellularLocation>
</comment>
<comment type="tissue specificity">
    <text evidence="4">Expressed by the venom gland.</text>
</comment>
<comment type="mass spectrometry"/>
<comment type="similarity">
    <text evidence="4">Belongs to the three-finger toxin family. Short-chain subfamily. Orphan group VIII (haditoxin) sub-subfamily.</text>
</comment>
<evidence type="ECO:0000250" key="1">
    <source>
        <dbReference type="UniProtKB" id="A8N286"/>
    </source>
</evidence>
<evidence type="ECO:0000250" key="2">
    <source>
        <dbReference type="UniProtKB" id="P60301"/>
    </source>
</evidence>
<evidence type="ECO:0000269" key="3">
    <source>
    </source>
</evidence>
<evidence type="ECO:0000305" key="4"/>
<dbReference type="SMR" id="P82464"/>
<dbReference type="GO" id="GO:0005576">
    <property type="term" value="C:extracellular region"/>
    <property type="evidence" value="ECO:0007669"/>
    <property type="project" value="UniProtKB-SubCell"/>
</dbReference>
<dbReference type="GO" id="GO:0090729">
    <property type="term" value="F:toxin activity"/>
    <property type="evidence" value="ECO:0007669"/>
    <property type="project" value="UniProtKB-KW"/>
</dbReference>
<dbReference type="CDD" id="cd00206">
    <property type="entry name" value="TFP_snake_toxin"/>
    <property type="match status" value="1"/>
</dbReference>
<dbReference type="FunFam" id="2.10.60.10:FF:000024">
    <property type="entry name" value="Cytotoxin 1"/>
    <property type="match status" value="1"/>
</dbReference>
<dbReference type="Gene3D" id="2.10.60.10">
    <property type="entry name" value="CD59"/>
    <property type="match status" value="1"/>
</dbReference>
<dbReference type="InterPro" id="IPR003571">
    <property type="entry name" value="Snake_3FTx"/>
</dbReference>
<dbReference type="InterPro" id="IPR045860">
    <property type="entry name" value="Snake_toxin-like_sf"/>
</dbReference>
<dbReference type="InterPro" id="IPR018354">
    <property type="entry name" value="Snake_toxin_con_site"/>
</dbReference>
<dbReference type="InterPro" id="IPR054131">
    <property type="entry name" value="Toxin_cobra-type"/>
</dbReference>
<dbReference type="Pfam" id="PF21947">
    <property type="entry name" value="Toxin_cobra-type"/>
    <property type="match status" value="1"/>
</dbReference>
<dbReference type="SUPFAM" id="SSF57302">
    <property type="entry name" value="Snake toxin-like"/>
    <property type="match status" value="1"/>
</dbReference>
<dbReference type="PROSITE" id="PS00272">
    <property type="entry name" value="SNAKE_TOXIN"/>
    <property type="match status" value="1"/>
</dbReference>
<feature type="chain" id="PRO_0000093652" description="Muscarinic toxin-like protein 3" evidence="3">
    <location>
        <begin position="1"/>
        <end position="65"/>
    </location>
</feature>
<feature type="disulfide bond" evidence="2">
    <location>
        <begin position="3"/>
        <end position="24"/>
    </location>
</feature>
<feature type="disulfide bond" evidence="2">
    <location>
        <begin position="17"/>
        <end position="41"/>
    </location>
</feature>
<feature type="disulfide bond" evidence="2">
    <location>
        <begin position="45"/>
        <end position="57"/>
    </location>
</feature>
<feature type="disulfide bond" evidence="2">
    <location>
        <begin position="58"/>
        <end position="63"/>
    </location>
</feature>
<proteinExistence type="evidence at protein level"/>